<keyword id="KW-1185">Reference proteome</keyword>
<keyword id="KW-0732">Signal</keyword>
<dbReference type="EMBL" id="AL123456">
    <property type="protein sequence ID" value="CCP45079.1"/>
    <property type="molecule type" value="Genomic_DNA"/>
</dbReference>
<dbReference type="PIR" id="E70733">
    <property type="entry name" value="E70733"/>
</dbReference>
<dbReference type="RefSeq" id="NP_216813.1">
    <property type="nucleotide sequence ID" value="NC_000962.3"/>
</dbReference>
<dbReference type="RefSeq" id="WP_003411851.1">
    <property type="nucleotide sequence ID" value="NZ_NVQJ01000012.1"/>
</dbReference>
<dbReference type="STRING" id="83332.Rv2297"/>
<dbReference type="PaxDb" id="83332-Rv2297"/>
<dbReference type="DNASU" id="887789"/>
<dbReference type="GeneID" id="887789"/>
<dbReference type="KEGG" id="mtu:Rv2297"/>
<dbReference type="KEGG" id="mtv:RVBD_2297"/>
<dbReference type="TubercuList" id="Rv2297"/>
<dbReference type="eggNOG" id="ENOG503210J">
    <property type="taxonomic scope" value="Bacteria"/>
</dbReference>
<dbReference type="InParanoid" id="P9WLD9"/>
<dbReference type="OrthoDB" id="4725822at2"/>
<dbReference type="Proteomes" id="UP000001584">
    <property type="component" value="Chromosome"/>
</dbReference>
<dbReference type="GO" id="GO:0005829">
    <property type="term" value="C:cytosol"/>
    <property type="evidence" value="ECO:0007005"/>
    <property type="project" value="MTBBASE"/>
</dbReference>
<reference key="1">
    <citation type="journal article" date="1998" name="Nature">
        <title>Deciphering the biology of Mycobacterium tuberculosis from the complete genome sequence.</title>
        <authorList>
            <person name="Cole S.T."/>
            <person name="Brosch R."/>
            <person name="Parkhill J."/>
            <person name="Garnier T."/>
            <person name="Churcher C.M."/>
            <person name="Harris D.E."/>
            <person name="Gordon S.V."/>
            <person name="Eiglmeier K."/>
            <person name="Gas S."/>
            <person name="Barry C.E. III"/>
            <person name="Tekaia F."/>
            <person name="Badcock K."/>
            <person name="Basham D."/>
            <person name="Brown D."/>
            <person name="Chillingworth T."/>
            <person name="Connor R."/>
            <person name="Davies R.M."/>
            <person name="Devlin K."/>
            <person name="Feltwell T."/>
            <person name="Gentles S."/>
            <person name="Hamlin N."/>
            <person name="Holroyd S."/>
            <person name="Hornsby T."/>
            <person name="Jagels K."/>
            <person name="Krogh A."/>
            <person name="McLean J."/>
            <person name="Moule S."/>
            <person name="Murphy L.D."/>
            <person name="Oliver S."/>
            <person name="Osborne J."/>
            <person name="Quail M.A."/>
            <person name="Rajandream M.A."/>
            <person name="Rogers J."/>
            <person name="Rutter S."/>
            <person name="Seeger K."/>
            <person name="Skelton S."/>
            <person name="Squares S."/>
            <person name="Squares R."/>
            <person name="Sulston J.E."/>
            <person name="Taylor K."/>
            <person name="Whitehead S."/>
            <person name="Barrell B.G."/>
        </authorList>
    </citation>
    <scope>NUCLEOTIDE SEQUENCE [LARGE SCALE GENOMIC DNA]</scope>
    <source>
        <strain>ATCC 25618 / H37Rv</strain>
    </source>
</reference>
<reference key="2">
    <citation type="journal article" date="2011" name="Mol. Cell. Proteomics">
        <title>Proteogenomic analysis of Mycobacterium tuberculosis by high resolution mass spectrometry.</title>
        <authorList>
            <person name="Kelkar D.S."/>
            <person name="Kumar D."/>
            <person name="Kumar P."/>
            <person name="Balakrishnan L."/>
            <person name="Muthusamy B."/>
            <person name="Yadav A.K."/>
            <person name="Shrivastava P."/>
            <person name="Marimuthu A."/>
            <person name="Anand S."/>
            <person name="Sundaram H."/>
            <person name="Kingsbury R."/>
            <person name="Harsha H.C."/>
            <person name="Nair B."/>
            <person name="Prasad T.S."/>
            <person name="Chauhan D.S."/>
            <person name="Katoch K."/>
            <person name="Katoch V.M."/>
            <person name="Kumar P."/>
            <person name="Chaerkady R."/>
            <person name="Ramachandran S."/>
            <person name="Dash D."/>
            <person name="Pandey A."/>
        </authorList>
    </citation>
    <scope>IDENTIFICATION BY MASS SPECTROMETRY [LARGE SCALE ANALYSIS]</scope>
    <source>
        <strain>ATCC 25618 / H37Rv</strain>
    </source>
</reference>
<proteinExistence type="evidence at protein level"/>
<protein>
    <recommendedName>
        <fullName>Uncharacterized protein Rv2297</fullName>
    </recommendedName>
</protein>
<feature type="signal peptide" evidence="1">
    <location>
        <begin position="1"/>
        <end position="21"/>
    </location>
</feature>
<feature type="chain" id="PRO_0000014131" description="Uncharacterized protein Rv2297">
    <location>
        <begin position="22"/>
        <end position="150"/>
    </location>
</feature>
<name>Y2297_MYCTU</name>
<organism>
    <name type="scientific">Mycobacterium tuberculosis (strain ATCC 25618 / H37Rv)</name>
    <dbReference type="NCBI Taxonomy" id="83332"/>
    <lineage>
        <taxon>Bacteria</taxon>
        <taxon>Bacillati</taxon>
        <taxon>Actinomycetota</taxon>
        <taxon>Actinomycetes</taxon>
        <taxon>Mycobacteriales</taxon>
        <taxon>Mycobacteriaceae</taxon>
        <taxon>Mycobacterium</taxon>
        <taxon>Mycobacterium tuberculosis complex</taxon>
    </lineage>
</organism>
<sequence length="150" mass="16468">MAMEMAMMGLLGTVVGASAMGIGGIAKSIAEAYVPGVAAAKDRRQQMNVDLQARRYEAVRVWRSGLCSASNAYRQWEAGSRDTHAPNVVGDEWFEGLRPHLPTTGEAAKFRTAYEVRCDNPTLMVLSLEIGRIEKEWMVEASGRTPKHRG</sequence>
<gene>
    <name type="ordered locus">Rv2297</name>
    <name type="ORF">MTCY339.13c</name>
</gene>
<accession>P9WLD9</accession>
<accession>L0T974</accession>
<accession>P64979</accession>
<accession>Q50669</accession>
<evidence type="ECO:0000255" key="1"/>